<proteinExistence type="inferred from homology"/>
<sequence length="374" mass="39335">MAALTDADCLVVKIGSALLVDRDAGGLRQAWLASLAQDVAWLTRQGVKVVLVSSGSIALGRGILKLSDTDLPLEQAQAAAAVGQIRLARAYEEVLAPHGITTGQVLMTLDDSSNRRRYLNSRATLKQLLSMGVVPIVNENDTIATDEIRFGDNDRLAAQIAVTVGADQLVLLSDVDGFYSANPNIDPTAQRFDEIGEITPEIEDMAGDACSGLSKGGMKTKLMAAKIATAAGCRMAITEGVVLNPLRALNEGAAATWFRADTDPQAARKGWIAAMKPKGTVHLDSGALAALRSGKSLLPAGVSHITGHFQRGDPVAIADGAGHTVGHGLVRYTAEEAGRIMGRKSNEIESVLGYPARAALIHRDDMALTIQNGD</sequence>
<reference key="1">
    <citation type="journal article" date="2007" name="J. Bacteriol.">
        <title>The complete genome sequence of Roseobacter denitrificans reveals a mixotrophic rather than photosynthetic metabolism.</title>
        <authorList>
            <person name="Swingley W.D."/>
            <person name="Sadekar S."/>
            <person name="Mastrian S.D."/>
            <person name="Matthies H.J."/>
            <person name="Hao J."/>
            <person name="Ramos H."/>
            <person name="Acharya C.R."/>
            <person name="Conrad A.L."/>
            <person name="Taylor H.L."/>
            <person name="Dejesa L.C."/>
            <person name="Shah M.K."/>
            <person name="O'Huallachain M.E."/>
            <person name="Lince M.T."/>
            <person name="Blankenship R.E."/>
            <person name="Beatty J.T."/>
            <person name="Touchman J.W."/>
        </authorList>
    </citation>
    <scope>NUCLEOTIDE SEQUENCE [LARGE SCALE GENOMIC DNA]</scope>
    <source>
        <strain>ATCC 33942 / OCh 114</strain>
    </source>
</reference>
<organism>
    <name type="scientific">Roseobacter denitrificans (strain ATCC 33942 / OCh 114)</name>
    <name type="common">Erythrobacter sp. (strain OCh 114)</name>
    <name type="synonym">Roseobacter denitrificans</name>
    <dbReference type="NCBI Taxonomy" id="375451"/>
    <lineage>
        <taxon>Bacteria</taxon>
        <taxon>Pseudomonadati</taxon>
        <taxon>Pseudomonadota</taxon>
        <taxon>Alphaproteobacteria</taxon>
        <taxon>Rhodobacterales</taxon>
        <taxon>Roseobacteraceae</taxon>
        <taxon>Roseobacter</taxon>
    </lineage>
</organism>
<gene>
    <name evidence="1" type="primary">proB</name>
    <name type="ordered locus">RD1_2659</name>
</gene>
<comment type="function">
    <text evidence="1">Catalyzes the transfer of a phosphate group to glutamate to form L-glutamate 5-phosphate.</text>
</comment>
<comment type="catalytic activity">
    <reaction evidence="1">
        <text>L-glutamate + ATP = L-glutamyl 5-phosphate + ADP</text>
        <dbReference type="Rhea" id="RHEA:14877"/>
        <dbReference type="ChEBI" id="CHEBI:29985"/>
        <dbReference type="ChEBI" id="CHEBI:30616"/>
        <dbReference type="ChEBI" id="CHEBI:58274"/>
        <dbReference type="ChEBI" id="CHEBI:456216"/>
        <dbReference type="EC" id="2.7.2.11"/>
    </reaction>
</comment>
<comment type="pathway">
    <text evidence="1">Amino-acid biosynthesis; L-proline biosynthesis; L-glutamate 5-semialdehyde from L-glutamate: step 1/2.</text>
</comment>
<comment type="subcellular location">
    <subcellularLocation>
        <location evidence="1">Cytoplasm</location>
    </subcellularLocation>
</comment>
<comment type="similarity">
    <text evidence="1">Belongs to the glutamate 5-kinase family.</text>
</comment>
<dbReference type="EC" id="2.7.2.11" evidence="1"/>
<dbReference type="EMBL" id="CP000362">
    <property type="protein sequence ID" value="ABG32206.1"/>
    <property type="molecule type" value="Genomic_DNA"/>
</dbReference>
<dbReference type="RefSeq" id="WP_011568823.1">
    <property type="nucleotide sequence ID" value="NC_008209.1"/>
</dbReference>
<dbReference type="SMR" id="Q165Y7"/>
<dbReference type="STRING" id="375451.RD1_2659"/>
<dbReference type="KEGG" id="rde:RD1_2659"/>
<dbReference type="eggNOG" id="COG0263">
    <property type="taxonomic scope" value="Bacteria"/>
</dbReference>
<dbReference type="HOGENOM" id="CLU_025400_2_0_5"/>
<dbReference type="OrthoDB" id="9804434at2"/>
<dbReference type="UniPathway" id="UPA00098">
    <property type="reaction ID" value="UER00359"/>
</dbReference>
<dbReference type="Proteomes" id="UP000007029">
    <property type="component" value="Chromosome"/>
</dbReference>
<dbReference type="GO" id="GO:0005829">
    <property type="term" value="C:cytosol"/>
    <property type="evidence" value="ECO:0007669"/>
    <property type="project" value="TreeGrafter"/>
</dbReference>
<dbReference type="GO" id="GO:0005524">
    <property type="term" value="F:ATP binding"/>
    <property type="evidence" value="ECO:0007669"/>
    <property type="project" value="UniProtKB-KW"/>
</dbReference>
<dbReference type="GO" id="GO:0004349">
    <property type="term" value="F:glutamate 5-kinase activity"/>
    <property type="evidence" value="ECO:0007669"/>
    <property type="project" value="UniProtKB-UniRule"/>
</dbReference>
<dbReference type="GO" id="GO:0003723">
    <property type="term" value="F:RNA binding"/>
    <property type="evidence" value="ECO:0007669"/>
    <property type="project" value="InterPro"/>
</dbReference>
<dbReference type="GO" id="GO:0055129">
    <property type="term" value="P:L-proline biosynthetic process"/>
    <property type="evidence" value="ECO:0007669"/>
    <property type="project" value="UniProtKB-UniRule"/>
</dbReference>
<dbReference type="CDD" id="cd04242">
    <property type="entry name" value="AAK_G5K_ProB"/>
    <property type="match status" value="1"/>
</dbReference>
<dbReference type="CDD" id="cd21157">
    <property type="entry name" value="PUA_G5K"/>
    <property type="match status" value="1"/>
</dbReference>
<dbReference type="FunFam" id="3.40.1160.10:FF:000018">
    <property type="entry name" value="Glutamate 5-kinase"/>
    <property type="match status" value="1"/>
</dbReference>
<dbReference type="Gene3D" id="3.40.1160.10">
    <property type="entry name" value="Acetylglutamate kinase-like"/>
    <property type="match status" value="1"/>
</dbReference>
<dbReference type="Gene3D" id="2.30.130.10">
    <property type="entry name" value="PUA domain"/>
    <property type="match status" value="1"/>
</dbReference>
<dbReference type="HAMAP" id="MF_00456">
    <property type="entry name" value="ProB"/>
    <property type="match status" value="1"/>
</dbReference>
<dbReference type="InterPro" id="IPR036393">
    <property type="entry name" value="AceGlu_kinase-like_sf"/>
</dbReference>
<dbReference type="InterPro" id="IPR001048">
    <property type="entry name" value="Asp/Glu/Uridylate_kinase"/>
</dbReference>
<dbReference type="InterPro" id="IPR041739">
    <property type="entry name" value="G5K_ProB"/>
</dbReference>
<dbReference type="InterPro" id="IPR001057">
    <property type="entry name" value="Glu/AcGlu_kinase"/>
</dbReference>
<dbReference type="InterPro" id="IPR011529">
    <property type="entry name" value="Glu_5kinase"/>
</dbReference>
<dbReference type="InterPro" id="IPR005715">
    <property type="entry name" value="Glu_5kinase/COase_Synthase"/>
</dbReference>
<dbReference type="InterPro" id="IPR019797">
    <property type="entry name" value="Glutamate_5-kinase_CS"/>
</dbReference>
<dbReference type="InterPro" id="IPR002478">
    <property type="entry name" value="PUA"/>
</dbReference>
<dbReference type="InterPro" id="IPR015947">
    <property type="entry name" value="PUA-like_sf"/>
</dbReference>
<dbReference type="InterPro" id="IPR036974">
    <property type="entry name" value="PUA_sf"/>
</dbReference>
<dbReference type="NCBIfam" id="TIGR01027">
    <property type="entry name" value="proB"/>
    <property type="match status" value="1"/>
</dbReference>
<dbReference type="PANTHER" id="PTHR43654">
    <property type="entry name" value="GLUTAMATE 5-KINASE"/>
    <property type="match status" value="1"/>
</dbReference>
<dbReference type="PANTHER" id="PTHR43654:SF1">
    <property type="entry name" value="ISOPENTENYL PHOSPHATE KINASE"/>
    <property type="match status" value="1"/>
</dbReference>
<dbReference type="Pfam" id="PF00696">
    <property type="entry name" value="AA_kinase"/>
    <property type="match status" value="1"/>
</dbReference>
<dbReference type="Pfam" id="PF01472">
    <property type="entry name" value="PUA"/>
    <property type="match status" value="1"/>
</dbReference>
<dbReference type="PIRSF" id="PIRSF000729">
    <property type="entry name" value="GK"/>
    <property type="match status" value="1"/>
</dbReference>
<dbReference type="PRINTS" id="PR00474">
    <property type="entry name" value="GLU5KINASE"/>
</dbReference>
<dbReference type="SMART" id="SM00359">
    <property type="entry name" value="PUA"/>
    <property type="match status" value="1"/>
</dbReference>
<dbReference type="SUPFAM" id="SSF53633">
    <property type="entry name" value="Carbamate kinase-like"/>
    <property type="match status" value="1"/>
</dbReference>
<dbReference type="SUPFAM" id="SSF88697">
    <property type="entry name" value="PUA domain-like"/>
    <property type="match status" value="1"/>
</dbReference>
<dbReference type="PROSITE" id="PS00902">
    <property type="entry name" value="GLUTAMATE_5_KINASE"/>
    <property type="match status" value="1"/>
</dbReference>
<dbReference type="PROSITE" id="PS50890">
    <property type="entry name" value="PUA"/>
    <property type="match status" value="1"/>
</dbReference>
<name>PROB_ROSDO</name>
<protein>
    <recommendedName>
        <fullName evidence="1">Glutamate 5-kinase</fullName>
        <ecNumber evidence="1">2.7.2.11</ecNumber>
    </recommendedName>
    <alternativeName>
        <fullName evidence="1">Gamma-glutamyl kinase</fullName>
        <shortName evidence="1">GK</shortName>
    </alternativeName>
</protein>
<keyword id="KW-0028">Amino-acid biosynthesis</keyword>
<keyword id="KW-0067">ATP-binding</keyword>
<keyword id="KW-0963">Cytoplasm</keyword>
<keyword id="KW-0418">Kinase</keyword>
<keyword id="KW-0547">Nucleotide-binding</keyword>
<keyword id="KW-0641">Proline biosynthesis</keyword>
<keyword id="KW-1185">Reference proteome</keyword>
<keyword id="KW-0808">Transferase</keyword>
<evidence type="ECO:0000255" key="1">
    <source>
        <dbReference type="HAMAP-Rule" id="MF_00456"/>
    </source>
</evidence>
<feature type="chain" id="PRO_0000252998" description="Glutamate 5-kinase">
    <location>
        <begin position="1"/>
        <end position="374"/>
    </location>
</feature>
<feature type="domain" description="PUA" evidence="1">
    <location>
        <begin position="278"/>
        <end position="355"/>
    </location>
</feature>
<feature type="binding site" evidence="1">
    <location>
        <position position="13"/>
    </location>
    <ligand>
        <name>ATP</name>
        <dbReference type="ChEBI" id="CHEBI:30616"/>
    </ligand>
</feature>
<feature type="binding site" evidence="1">
    <location>
        <position position="54"/>
    </location>
    <ligand>
        <name>substrate</name>
    </ligand>
</feature>
<feature type="binding site" evidence="1">
    <location>
        <position position="141"/>
    </location>
    <ligand>
        <name>substrate</name>
    </ligand>
</feature>
<feature type="binding site" evidence="1">
    <location>
        <position position="153"/>
    </location>
    <ligand>
        <name>substrate</name>
    </ligand>
</feature>
<feature type="binding site" evidence="1">
    <location>
        <begin position="173"/>
        <end position="174"/>
    </location>
    <ligand>
        <name>ATP</name>
        <dbReference type="ChEBI" id="CHEBI:30616"/>
    </ligand>
</feature>
<accession>Q165Y7</accession>